<name>RF1_STRA5</name>
<feature type="chain" id="PRO_0000177746" description="Peptide chain release factor 1">
    <location>
        <begin position="1"/>
        <end position="359"/>
    </location>
</feature>
<feature type="modified residue" description="N5-methylglutamine" evidence="1">
    <location>
        <position position="236"/>
    </location>
</feature>
<gene>
    <name evidence="1" type="primary">prfA</name>
    <name type="ordered locus">SAG1077</name>
</gene>
<protein>
    <recommendedName>
        <fullName evidence="1">Peptide chain release factor 1</fullName>
        <shortName evidence="1">RF-1</shortName>
    </recommendedName>
</protein>
<evidence type="ECO:0000255" key="1">
    <source>
        <dbReference type="HAMAP-Rule" id="MF_00093"/>
    </source>
</evidence>
<reference key="1">
    <citation type="journal article" date="2002" name="Proc. Natl. Acad. Sci. U.S.A.">
        <title>Complete genome sequence and comparative genomic analysis of an emerging human pathogen, serotype V Streptococcus agalactiae.</title>
        <authorList>
            <person name="Tettelin H."/>
            <person name="Masignani V."/>
            <person name="Cieslewicz M.J."/>
            <person name="Eisen J.A."/>
            <person name="Peterson S.N."/>
            <person name="Wessels M.R."/>
            <person name="Paulsen I.T."/>
            <person name="Nelson K.E."/>
            <person name="Margarit I."/>
            <person name="Read T.D."/>
            <person name="Madoff L.C."/>
            <person name="Wolf A.M."/>
            <person name="Beanan M.J."/>
            <person name="Brinkac L.M."/>
            <person name="Daugherty S.C."/>
            <person name="DeBoy R.T."/>
            <person name="Durkin A.S."/>
            <person name="Kolonay J.F."/>
            <person name="Madupu R."/>
            <person name="Lewis M.R."/>
            <person name="Radune D."/>
            <person name="Fedorova N.B."/>
            <person name="Scanlan D."/>
            <person name="Khouri H.M."/>
            <person name="Mulligan S."/>
            <person name="Carty H.A."/>
            <person name="Cline R.T."/>
            <person name="Van Aken S.E."/>
            <person name="Gill J."/>
            <person name="Scarselli M."/>
            <person name="Mora M."/>
            <person name="Iacobini E.T."/>
            <person name="Brettoni C."/>
            <person name="Galli G."/>
            <person name="Mariani M."/>
            <person name="Vegni F."/>
            <person name="Maione D."/>
            <person name="Rinaudo D."/>
            <person name="Rappuoli R."/>
            <person name="Telford J.L."/>
            <person name="Kasper D.L."/>
            <person name="Grandi G."/>
            <person name="Fraser C.M."/>
        </authorList>
    </citation>
    <scope>NUCLEOTIDE SEQUENCE [LARGE SCALE GENOMIC DNA]</scope>
    <source>
        <strain>ATCC BAA-611 / 2603 V/R</strain>
    </source>
</reference>
<comment type="function">
    <text evidence="1">Peptide chain release factor 1 directs the termination of translation in response to the peptide chain termination codons UAG and UAA.</text>
</comment>
<comment type="subcellular location">
    <subcellularLocation>
        <location evidence="1">Cytoplasm</location>
    </subcellularLocation>
</comment>
<comment type="PTM">
    <text evidence="1">Methylated by PrmC. Methylation increases the termination efficiency of RF1.</text>
</comment>
<comment type="similarity">
    <text evidence="1">Belongs to the prokaryotic/mitochondrial release factor family.</text>
</comment>
<keyword id="KW-0963">Cytoplasm</keyword>
<keyword id="KW-0488">Methylation</keyword>
<keyword id="KW-0648">Protein biosynthesis</keyword>
<keyword id="KW-1185">Reference proteome</keyword>
<organism>
    <name type="scientific">Streptococcus agalactiae serotype V (strain ATCC BAA-611 / 2603 V/R)</name>
    <dbReference type="NCBI Taxonomy" id="208435"/>
    <lineage>
        <taxon>Bacteria</taxon>
        <taxon>Bacillati</taxon>
        <taxon>Bacillota</taxon>
        <taxon>Bacilli</taxon>
        <taxon>Lactobacillales</taxon>
        <taxon>Streptococcaceae</taxon>
        <taxon>Streptococcus</taxon>
    </lineage>
</organism>
<proteinExistence type="inferred from homology"/>
<accession>Q8DZM4</accession>
<dbReference type="EMBL" id="AE009948">
    <property type="protein sequence ID" value="AAM99958.1"/>
    <property type="molecule type" value="Genomic_DNA"/>
</dbReference>
<dbReference type="RefSeq" id="NP_688086.1">
    <property type="nucleotide sequence ID" value="NC_004116.1"/>
</dbReference>
<dbReference type="RefSeq" id="WP_001028827.1">
    <property type="nucleotide sequence ID" value="NC_004116.1"/>
</dbReference>
<dbReference type="SMR" id="Q8DZM4"/>
<dbReference type="STRING" id="208435.SAG1077"/>
<dbReference type="KEGG" id="sag:SAG1077"/>
<dbReference type="PATRIC" id="fig|208435.3.peg.1086"/>
<dbReference type="HOGENOM" id="CLU_036856_0_1_9"/>
<dbReference type="OrthoDB" id="9806673at2"/>
<dbReference type="Proteomes" id="UP000000821">
    <property type="component" value="Chromosome"/>
</dbReference>
<dbReference type="GO" id="GO:0005737">
    <property type="term" value="C:cytoplasm"/>
    <property type="evidence" value="ECO:0007669"/>
    <property type="project" value="UniProtKB-SubCell"/>
</dbReference>
<dbReference type="GO" id="GO:0016149">
    <property type="term" value="F:translation release factor activity, codon specific"/>
    <property type="evidence" value="ECO:0007669"/>
    <property type="project" value="UniProtKB-UniRule"/>
</dbReference>
<dbReference type="FunFam" id="3.30.160.20:FF:000027">
    <property type="entry name" value="Peptide chain release factor 1"/>
    <property type="match status" value="1"/>
</dbReference>
<dbReference type="FunFam" id="3.30.70.1660:FF:000002">
    <property type="entry name" value="Peptide chain release factor 1"/>
    <property type="match status" value="1"/>
</dbReference>
<dbReference type="FunFam" id="3.30.70.1660:FF:000004">
    <property type="entry name" value="Peptide chain release factor 1"/>
    <property type="match status" value="1"/>
</dbReference>
<dbReference type="Gene3D" id="3.30.160.20">
    <property type="match status" value="1"/>
</dbReference>
<dbReference type="Gene3D" id="3.30.70.1660">
    <property type="match status" value="2"/>
</dbReference>
<dbReference type="Gene3D" id="6.10.140.1950">
    <property type="match status" value="1"/>
</dbReference>
<dbReference type="HAMAP" id="MF_00093">
    <property type="entry name" value="Rel_fac_1"/>
    <property type="match status" value="1"/>
</dbReference>
<dbReference type="InterPro" id="IPR005139">
    <property type="entry name" value="PCRF"/>
</dbReference>
<dbReference type="InterPro" id="IPR000352">
    <property type="entry name" value="Pep_chain_release_fac_I"/>
</dbReference>
<dbReference type="InterPro" id="IPR045853">
    <property type="entry name" value="Pep_chain_release_fac_I_sf"/>
</dbReference>
<dbReference type="InterPro" id="IPR050057">
    <property type="entry name" value="Prokaryotic/Mito_RF"/>
</dbReference>
<dbReference type="InterPro" id="IPR004373">
    <property type="entry name" value="RF-1"/>
</dbReference>
<dbReference type="NCBIfam" id="TIGR00019">
    <property type="entry name" value="prfA"/>
    <property type="match status" value="1"/>
</dbReference>
<dbReference type="NCBIfam" id="NF001859">
    <property type="entry name" value="PRK00591.1"/>
    <property type="match status" value="1"/>
</dbReference>
<dbReference type="PANTHER" id="PTHR43804">
    <property type="entry name" value="LD18447P"/>
    <property type="match status" value="1"/>
</dbReference>
<dbReference type="PANTHER" id="PTHR43804:SF7">
    <property type="entry name" value="LD18447P"/>
    <property type="match status" value="1"/>
</dbReference>
<dbReference type="Pfam" id="PF03462">
    <property type="entry name" value="PCRF"/>
    <property type="match status" value="1"/>
</dbReference>
<dbReference type="Pfam" id="PF00472">
    <property type="entry name" value="RF-1"/>
    <property type="match status" value="1"/>
</dbReference>
<dbReference type="SMART" id="SM00937">
    <property type="entry name" value="PCRF"/>
    <property type="match status" value="1"/>
</dbReference>
<dbReference type="SUPFAM" id="SSF75620">
    <property type="entry name" value="Release factor"/>
    <property type="match status" value="1"/>
</dbReference>
<dbReference type="PROSITE" id="PS00745">
    <property type="entry name" value="RF_PROK_I"/>
    <property type="match status" value="1"/>
</dbReference>
<sequence length="359" mass="40600">MNIYDQLQAVEDRYEELGELLSDPDVVSDTKRFMELSREEASTRETVTAYREYKQVIQNISDAEEMIKDASGDAELEEMAKEELKESKAAKEEYEERLKILLLPKDPNDDKNIILEIRGAAGGDEAALFAGDLLTMYQKYAETQGWRFEVMESSVNGVGGIKEVVAMVSGQSVYSKLKYESGAHRVQRVPVTESQGRVHTSTATVLVMPEVEEVEYEIDQKDLRVDIYHASGAGGQNVNKVATAVRMVHIPTGIKVEMQEERTQQKNRDKAMKIIRARVADHFAQIAQDEQDAERKSTVGTGDRSERIRTYNFPQNRVTDHRIGLTLQKLDTILSGKMDEVIDALVMYDQTQKLEALNK</sequence>